<keyword id="KW-0150">Chloroplast</keyword>
<keyword id="KW-0240">DNA-directed RNA polymerase</keyword>
<keyword id="KW-0548">Nucleotidyltransferase</keyword>
<keyword id="KW-0934">Plastid</keyword>
<keyword id="KW-1185">Reference proteome</keyword>
<keyword id="KW-0804">Transcription</keyword>
<keyword id="KW-0808">Transferase</keyword>
<proteinExistence type="inferred from homology"/>
<evidence type="ECO:0000255" key="1">
    <source>
        <dbReference type="HAMAP-Rule" id="MF_01321"/>
    </source>
</evidence>
<sequence>MTLFRQNSALPNFLDSQRDSFRYFLETGIREELDFFSPIVGQSLGSSSKRPTDRFISVSFHSKDFYFKKPHYTPQEAVQKLGTYKSSLIVPVHVYSKYLNLNATFPVAFCDLPLMTEHGTFILNGSPRVIVHQIVRCPGVYLKPQFDKQGNRTHLVSFLSAYGSWLRFETDKKGVVFAHIDNLRKVPVTVFLQALGFSMDTIVGALKYPEALDPTLKEVDWKLTTDEAILLLMSRLFPNRPATVLRGRKFLFNQFFNPRRYSLSDVGRKRVNQKFRMRSKTKHLTLTPQDALAALDYLLRCENGETEFLDDIDHLKNRRARLAGELIQTQFRLGLNRLERVIYNRISDENILRKTPGALGSLNSLIRTQVLASVFQEFFGSNQLSQFMDQTNPLAEITHKRRLSSLGPGGLNRDRAGLIVRGIHPSYYGRICPIETPEGKNAGLVGSIATFTQINKNGFLESPYYKLISESNTPDRNGFFLLSAFYEEDTVVAQGDVDLSNFRIPTRNKSQFTENTVQEINFLGLCPIQFMSIATSLIPFLEHDDANRALMGSNMQRQAVSLLRSERPFVGTGLEAHVTRDIGATIVAKQNSYISYVDAQRIDYFTPVIGDTNLIDYQNLTAEDVFASNQFKHNTIWLTSYQRSNQDTCLNHKPLVEANTWVEAGDCLADNAATAKGELALGRNILIGYMPWEGYNFEDAVLVSERLVYDDVFTSIHISRYEVSTARLREGQEYFTNQVDRNQYLDEFGVVKIGTWVEAGDVLVGKISPQPDSDNDPESRLLRAIFGGVARNTKTTSYCLSSGVSGRILDVRCEFKRQTKNIEDESIESTGSVYVYLVEKRRLQVGDKVAGRHGNKGIVSNILPRVDMPYLQSGKALDMVLNPLGVPSRMNVGQIFECLLGLAANTLKQNFKVLPFDEMHGAEVSRGFVYHYLYKSRLLTQQKWLFKPNSPGKSIVFDGRTGLNFDQPVTVGYPYILKLVHLVDDKIHARSTGPYSLVTQQPLGGRSKKGGQRLGEMEVWALEGFGAAYVLQELLTIKSDDMIGRNRAFMSMIRGTLLPKSGIPESFKVLVSELRGLCLDMSIARINF</sequence>
<gene>
    <name evidence="1" type="primary">rpoB</name>
    <name type="ordered locus">OtCpg00260</name>
</gene>
<protein>
    <recommendedName>
        <fullName evidence="1">DNA-directed RNA polymerase subunit beta</fullName>
        <ecNumber evidence="1">2.7.7.6</ecNumber>
    </recommendedName>
    <alternativeName>
        <fullName evidence="1">PEP</fullName>
    </alternativeName>
    <alternativeName>
        <fullName evidence="1">Plastid-encoded RNA polymerase subunit beta</fullName>
        <shortName evidence="1">RNA polymerase subunit beta</shortName>
    </alternativeName>
</protein>
<accession>Q0P3M6</accession>
<organism>
    <name type="scientific">Ostreococcus tauri</name>
    <dbReference type="NCBI Taxonomy" id="70448"/>
    <lineage>
        <taxon>Eukaryota</taxon>
        <taxon>Viridiplantae</taxon>
        <taxon>Chlorophyta</taxon>
        <taxon>Mamiellophyceae</taxon>
        <taxon>Mamiellales</taxon>
        <taxon>Bathycoccaceae</taxon>
        <taxon>Ostreococcus</taxon>
    </lineage>
</organism>
<dbReference type="EC" id="2.7.7.6" evidence="1"/>
<dbReference type="EMBL" id="CR954199">
    <property type="protein sequence ID" value="CAL36351.1"/>
    <property type="molecule type" value="Genomic_DNA"/>
</dbReference>
<dbReference type="RefSeq" id="YP_717229.1">
    <property type="nucleotide sequence ID" value="NC_008289.1"/>
</dbReference>
<dbReference type="SMR" id="Q0P3M6"/>
<dbReference type="FunCoup" id="Q0P3M6">
    <property type="interactions" value="174"/>
</dbReference>
<dbReference type="STRING" id="70448.Q0P3M6"/>
<dbReference type="GeneID" id="4238798"/>
<dbReference type="KEGG" id="ota:OstapCp26"/>
<dbReference type="eggNOG" id="KOG0214">
    <property type="taxonomic scope" value="Eukaryota"/>
</dbReference>
<dbReference type="InParanoid" id="Q0P3M6"/>
<dbReference type="Proteomes" id="UP000009170">
    <property type="component" value="Chloroplast"/>
</dbReference>
<dbReference type="GO" id="GO:0009507">
    <property type="term" value="C:chloroplast"/>
    <property type="evidence" value="ECO:0007669"/>
    <property type="project" value="UniProtKB-SubCell"/>
</dbReference>
<dbReference type="GO" id="GO:0000428">
    <property type="term" value="C:DNA-directed RNA polymerase complex"/>
    <property type="evidence" value="ECO:0007669"/>
    <property type="project" value="UniProtKB-KW"/>
</dbReference>
<dbReference type="GO" id="GO:0005739">
    <property type="term" value="C:mitochondrion"/>
    <property type="evidence" value="ECO:0007669"/>
    <property type="project" value="GOC"/>
</dbReference>
<dbReference type="GO" id="GO:0003677">
    <property type="term" value="F:DNA binding"/>
    <property type="evidence" value="ECO:0007669"/>
    <property type="project" value="UniProtKB-UniRule"/>
</dbReference>
<dbReference type="GO" id="GO:0003899">
    <property type="term" value="F:DNA-directed RNA polymerase activity"/>
    <property type="evidence" value="ECO:0007669"/>
    <property type="project" value="UniProtKB-UniRule"/>
</dbReference>
<dbReference type="GO" id="GO:0032549">
    <property type="term" value="F:ribonucleoside binding"/>
    <property type="evidence" value="ECO:0007669"/>
    <property type="project" value="InterPro"/>
</dbReference>
<dbReference type="GO" id="GO:0006351">
    <property type="term" value="P:DNA-templated transcription"/>
    <property type="evidence" value="ECO:0007669"/>
    <property type="project" value="UniProtKB-UniRule"/>
</dbReference>
<dbReference type="CDD" id="cd00653">
    <property type="entry name" value="RNA_pol_B_RPB2"/>
    <property type="match status" value="1"/>
</dbReference>
<dbReference type="Gene3D" id="2.40.50.100">
    <property type="match status" value="1"/>
</dbReference>
<dbReference type="Gene3D" id="2.40.50.150">
    <property type="match status" value="1"/>
</dbReference>
<dbReference type="Gene3D" id="3.90.1100.10">
    <property type="match status" value="1"/>
</dbReference>
<dbReference type="Gene3D" id="2.30.150.10">
    <property type="entry name" value="DNA-directed RNA polymerase, beta subunit, external 1 domain"/>
    <property type="match status" value="1"/>
</dbReference>
<dbReference type="Gene3D" id="2.40.270.10">
    <property type="entry name" value="DNA-directed RNA polymerase, subunit 2, domain 6"/>
    <property type="match status" value="2"/>
</dbReference>
<dbReference type="Gene3D" id="3.90.1800.10">
    <property type="entry name" value="RNA polymerase alpha subunit dimerisation domain"/>
    <property type="match status" value="1"/>
</dbReference>
<dbReference type="Gene3D" id="3.90.1110.10">
    <property type="entry name" value="RNA polymerase Rpb2, domain 2"/>
    <property type="match status" value="1"/>
</dbReference>
<dbReference type="HAMAP" id="MF_01321">
    <property type="entry name" value="RNApol_bact_RpoB"/>
    <property type="match status" value="1"/>
</dbReference>
<dbReference type="InterPro" id="IPR042107">
    <property type="entry name" value="DNA-dir_RNA_pol_bsu_ext_1_sf"/>
</dbReference>
<dbReference type="InterPro" id="IPR015712">
    <property type="entry name" value="DNA-dir_RNA_pol_su2"/>
</dbReference>
<dbReference type="InterPro" id="IPR007120">
    <property type="entry name" value="DNA-dir_RNAP_su2_dom"/>
</dbReference>
<dbReference type="InterPro" id="IPR037033">
    <property type="entry name" value="DNA-dir_RNAP_su2_hyb_sf"/>
</dbReference>
<dbReference type="InterPro" id="IPR010243">
    <property type="entry name" value="RNA_pol_bsu_bac"/>
</dbReference>
<dbReference type="InterPro" id="IPR007121">
    <property type="entry name" value="RNA_pol_bsu_CS"/>
</dbReference>
<dbReference type="InterPro" id="IPR007644">
    <property type="entry name" value="RNA_pol_bsu_protrusion"/>
</dbReference>
<dbReference type="InterPro" id="IPR007642">
    <property type="entry name" value="RNA_pol_Rpb2_2"/>
</dbReference>
<dbReference type="InterPro" id="IPR037034">
    <property type="entry name" value="RNA_pol_Rpb2_2_sf"/>
</dbReference>
<dbReference type="InterPro" id="IPR007645">
    <property type="entry name" value="RNA_pol_Rpb2_3"/>
</dbReference>
<dbReference type="InterPro" id="IPR007641">
    <property type="entry name" value="RNA_pol_Rpb2_7"/>
</dbReference>
<dbReference type="InterPro" id="IPR014724">
    <property type="entry name" value="RNA_pol_RPB2_OB-fold"/>
</dbReference>
<dbReference type="NCBIfam" id="NF001616">
    <property type="entry name" value="PRK00405.1"/>
    <property type="match status" value="1"/>
</dbReference>
<dbReference type="PANTHER" id="PTHR20856">
    <property type="entry name" value="DNA-DIRECTED RNA POLYMERASE I SUBUNIT 2"/>
    <property type="match status" value="1"/>
</dbReference>
<dbReference type="Pfam" id="PF04563">
    <property type="entry name" value="RNA_pol_Rpb2_1"/>
    <property type="match status" value="1"/>
</dbReference>
<dbReference type="Pfam" id="PF04561">
    <property type="entry name" value="RNA_pol_Rpb2_2"/>
    <property type="match status" value="1"/>
</dbReference>
<dbReference type="Pfam" id="PF04565">
    <property type="entry name" value="RNA_pol_Rpb2_3"/>
    <property type="match status" value="1"/>
</dbReference>
<dbReference type="Pfam" id="PF00562">
    <property type="entry name" value="RNA_pol_Rpb2_6"/>
    <property type="match status" value="1"/>
</dbReference>
<dbReference type="Pfam" id="PF04560">
    <property type="entry name" value="RNA_pol_Rpb2_7"/>
    <property type="match status" value="1"/>
</dbReference>
<dbReference type="SUPFAM" id="SSF64484">
    <property type="entry name" value="beta and beta-prime subunits of DNA dependent RNA-polymerase"/>
    <property type="match status" value="1"/>
</dbReference>
<dbReference type="PROSITE" id="PS01166">
    <property type="entry name" value="RNA_POL_BETA"/>
    <property type="match status" value="1"/>
</dbReference>
<feature type="chain" id="PRO_0000276593" description="DNA-directed RNA polymerase subunit beta">
    <location>
        <begin position="1"/>
        <end position="1088"/>
    </location>
</feature>
<comment type="function">
    <text evidence="1">DNA-dependent RNA polymerase catalyzes the transcription of DNA into RNA using the four ribonucleoside triphosphates as substrates.</text>
</comment>
<comment type="catalytic activity">
    <reaction evidence="1">
        <text>RNA(n) + a ribonucleoside 5'-triphosphate = RNA(n+1) + diphosphate</text>
        <dbReference type="Rhea" id="RHEA:21248"/>
        <dbReference type="Rhea" id="RHEA-COMP:14527"/>
        <dbReference type="Rhea" id="RHEA-COMP:17342"/>
        <dbReference type="ChEBI" id="CHEBI:33019"/>
        <dbReference type="ChEBI" id="CHEBI:61557"/>
        <dbReference type="ChEBI" id="CHEBI:140395"/>
        <dbReference type="EC" id="2.7.7.6"/>
    </reaction>
</comment>
<comment type="subunit">
    <text evidence="1">In plastids the minimal PEP RNA polymerase catalytic core is composed of four subunits: alpha, beta, beta', and beta''. When a (nuclear-encoded) sigma factor is associated with the core the holoenzyme is formed, which can initiate transcription.</text>
</comment>
<comment type="subcellular location">
    <subcellularLocation>
        <location>Plastid</location>
        <location>Chloroplast</location>
    </subcellularLocation>
</comment>
<comment type="similarity">
    <text evidence="1">Belongs to the RNA polymerase beta chain family.</text>
</comment>
<reference key="1">
    <citation type="journal article" date="2007" name="Mol. Biol. Evol.">
        <title>The complete chloroplast and mitochondrial DNA sequence of Ostreococcus tauri: organelle genomes of the smallest eukaryote are examples of compaction.</title>
        <authorList>
            <person name="Robbens S."/>
            <person name="Derelle E."/>
            <person name="Ferraz C."/>
            <person name="Wuyts J."/>
            <person name="Moreau H."/>
            <person name="Van de Peer Y."/>
        </authorList>
    </citation>
    <scope>NUCLEOTIDE SEQUENCE [LARGE SCALE GENOMIC DNA]</scope>
    <source>
        <strain>OTTH0595</strain>
    </source>
</reference>
<name>RPOB_OSTTA</name>
<geneLocation type="chloroplast"/>